<comment type="function">
    <text evidence="1">Part of the ABC transporter complex UgpBAEC involved in sn-glycerol-3-phosphate (G3P) import. Responsible for energy coupling to the transport system.</text>
</comment>
<comment type="catalytic activity">
    <reaction evidence="1">
        <text>sn-glycerol 3-phosphate(out) + ATP + H2O = sn-glycerol 3-phosphate(in) + ADP + phosphate + H(+)</text>
        <dbReference type="Rhea" id="RHEA:21668"/>
        <dbReference type="ChEBI" id="CHEBI:15377"/>
        <dbReference type="ChEBI" id="CHEBI:15378"/>
        <dbReference type="ChEBI" id="CHEBI:30616"/>
        <dbReference type="ChEBI" id="CHEBI:43474"/>
        <dbReference type="ChEBI" id="CHEBI:57597"/>
        <dbReference type="ChEBI" id="CHEBI:456216"/>
        <dbReference type="EC" id="7.6.2.10"/>
    </reaction>
</comment>
<comment type="subunit">
    <text evidence="1">The complex is composed of two ATP-binding proteins (UgpC), two transmembrane proteins (UgpA and UgpE) and a solute-binding protein (UgpB).</text>
</comment>
<comment type="subcellular location">
    <subcellularLocation>
        <location evidence="1">Cell inner membrane</location>
        <topology evidence="1">Peripheral membrane protein</topology>
    </subcellularLocation>
</comment>
<comment type="similarity">
    <text evidence="1">Belongs to the ABC transporter superfamily. sn-glycerol-3-phosphate importer (TC 3.A.1.1.3) family.</text>
</comment>
<proteinExistence type="inferred from homology"/>
<feature type="chain" id="PRO_0000289749" description="sn-glycerol-3-phosphate import ATP-binding protein UgpC">
    <location>
        <begin position="1"/>
        <end position="357"/>
    </location>
</feature>
<feature type="domain" description="ABC transporter" evidence="1">
    <location>
        <begin position="4"/>
        <end position="235"/>
    </location>
</feature>
<feature type="binding site" evidence="1">
    <location>
        <begin position="37"/>
        <end position="44"/>
    </location>
    <ligand>
        <name>ATP</name>
        <dbReference type="ChEBI" id="CHEBI:30616"/>
    </ligand>
</feature>
<sequence length="357" mass="39829">MACLKLQAVTKSYDGKTQIIQPIDLDVADGEFVVMVGPSGCGKSTLLRMVAGLERTTSGDIYIDNQRVTDLEPKDRGIAMVFQNYALYPHMNVFDNMAYSLKIRGFGKTQIRERVEEAARILELMPLLQRKPRELSGGQRQRVAMGRAIVREPAVFLFDEPLSNLDAKLRVQMRLELQQLHQRLKTTSLYVTHDQVEAMTLAQRVIVMNKGIAEQIGAPSDIYRRPASLFVASFIGSPAMNLWAGRISDDGCRFDIGEDIALVLPEPKPQWRGKALTLGVRPEHIQLATRETGGIPLQISTLELLGADNLAHGKWGGQNVIARLSYEHCPAIGSTLWLHLPTSSWHLFDSQSGLRME</sequence>
<accession>Q6CZ34</accession>
<evidence type="ECO:0000255" key="1">
    <source>
        <dbReference type="HAMAP-Rule" id="MF_01727"/>
    </source>
</evidence>
<organism>
    <name type="scientific">Pectobacterium atrosepticum (strain SCRI 1043 / ATCC BAA-672)</name>
    <name type="common">Erwinia carotovora subsp. atroseptica</name>
    <dbReference type="NCBI Taxonomy" id="218491"/>
    <lineage>
        <taxon>Bacteria</taxon>
        <taxon>Pseudomonadati</taxon>
        <taxon>Pseudomonadota</taxon>
        <taxon>Gammaproteobacteria</taxon>
        <taxon>Enterobacterales</taxon>
        <taxon>Pectobacteriaceae</taxon>
        <taxon>Pectobacterium</taxon>
    </lineage>
</organism>
<reference key="1">
    <citation type="journal article" date="2004" name="Proc. Natl. Acad. Sci. U.S.A.">
        <title>Genome sequence of the enterobacterial phytopathogen Erwinia carotovora subsp. atroseptica and characterization of virulence factors.</title>
        <authorList>
            <person name="Bell K.S."/>
            <person name="Sebaihia M."/>
            <person name="Pritchard L."/>
            <person name="Holden M.T.G."/>
            <person name="Hyman L.J."/>
            <person name="Holeva M.C."/>
            <person name="Thomson N.R."/>
            <person name="Bentley S.D."/>
            <person name="Churcher L.J.C."/>
            <person name="Mungall K."/>
            <person name="Atkin R."/>
            <person name="Bason N."/>
            <person name="Brooks K."/>
            <person name="Chillingworth T."/>
            <person name="Clark K."/>
            <person name="Doggett J."/>
            <person name="Fraser A."/>
            <person name="Hance Z."/>
            <person name="Hauser H."/>
            <person name="Jagels K."/>
            <person name="Moule S."/>
            <person name="Norbertczak H."/>
            <person name="Ormond D."/>
            <person name="Price C."/>
            <person name="Quail M.A."/>
            <person name="Sanders M."/>
            <person name="Walker D."/>
            <person name="Whitehead S."/>
            <person name="Salmond G.P.C."/>
            <person name="Birch P.R.J."/>
            <person name="Parkhill J."/>
            <person name="Toth I.K."/>
        </authorList>
    </citation>
    <scope>NUCLEOTIDE SEQUENCE [LARGE SCALE GENOMIC DNA]</scope>
    <source>
        <strain>SCRI 1043 / ATCC BAA-672</strain>
    </source>
</reference>
<keyword id="KW-0067">ATP-binding</keyword>
<keyword id="KW-0997">Cell inner membrane</keyword>
<keyword id="KW-1003">Cell membrane</keyword>
<keyword id="KW-0472">Membrane</keyword>
<keyword id="KW-0547">Nucleotide-binding</keyword>
<keyword id="KW-1185">Reference proteome</keyword>
<keyword id="KW-0762">Sugar transport</keyword>
<keyword id="KW-1278">Translocase</keyword>
<keyword id="KW-0813">Transport</keyword>
<protein>
    <recommendedName>
        <fullName evidence="1">sn-glycerol-3-phosphate import ATP-binding protein UgpC</fullName>
        <ecNumber evidence="1">7.6.2.10</ecNumber>
    </recommendedName>
</protein>
<dbReference type="EC" id="7.6.2.10" evidence="1"/>
<dbReference type="EMBL" id="BX950851">
    <property type="protein sequence ID" value="CAG77216.1"/>
    <property type="molecule type" value="Genomic_DNA"/>
</dbReference>
<dbReference type="RefSeq" id="WP_011095783.1">
    <property type="nucleotide sequence ID" value="NC_004547.2"/>
</dbReference>
<dbReference type="SMR" id="Q6CZ34"/>
<dbReference type="STRING" id="218491.ECA4319"/>
<dbReference type="KEGG" id="eca:ECA4319"/>
<dbReference type="PATRIC" id="fig|218491.5.peg.4399"/>
<dbReference type="eggNOG" id="COG3842">
    <property type="taxonomic scope" value="Bacteria"/>
</dbReference>
<dbReference type="HOGENOM" id="CLU_000604_1_1_6"/>
<dbReference type="OrthoDB" id="9802264at2"/>
<dbReference type="Proteomes" id="UP000007966">
    <property type="component" value="Chromosome"/>
</dbReference>
<dbReference type="GO" id="GO:0055052">
    <property type="term" value="C:ATP-binding cassette (ABC) transporter complex, substrate-binding subunit-containing"/>
    <property type="evidence" value="ECO:0007669"/>
    <property type="project" value="TreeGrafter"/>
</dbReference>
<dbReference type="GO" id="GO:0015430">
    <property type="term" value="F:ABC-type glycerol-3-phosphate transporter activity"/>
    <property type="evidence" value="ECO:0007669"/>
    <property type="project" value="UniProtKB-EC"/>
</dbReference>
<dbReference type="GO" id="GO:0005524">
    <property type="term" value="F:ATP binding"/>
    <property type="evidence" value="ECO:0007669"/>
    <property type="project" value="UniProtKB-KW"/>
</dbReference>
<dbReference type="GO" id="GO:0016887">
    <property type="term" value="F:ATP hydrolysis activity"/>
    <property type="evidence" value="ECO:0007669"/>
    <property type="project" value="InterPro"/>
</dbReference>
<dbReference type="GO" id="GO:0008643">
    <property type="term" value="P:carbohydrate transport"/>
    <property type="evidence" value="ECO:0007669"/>
    <property type="project" value="InterPro"/>
</dbReference>
<dbReference type="GO" id="GO:0001407">
    <property type="term" value="P:glycerophosphodiester transmembrane transport"/>
    <property type="evidence" value="ECO:0007669"/>
    <property type="project" value="TreeGrafter"/>
</dbReference>
<dbReference type="CDD" id="cd03301">
    <property type="entry name" value="ABC_MalK_N"/>
    <property type="match status" value="1"/>
</dbReference>
<dbReference type="FunFam" id="3.40.50.300:FF:000042">
    <property type="entry name" value="Maltose/maltodextrin ABC transporter, ATP-binding protein"/>
    <property type="match status" value="1"/>
</dbReference>
<dbReference type="Gene3D" id="2.40.50.100">
    <property type="match status" value="1"/>
</dbReference>
<dbReference type="Gene3D" id="2.40.50.140">
    <property type="entry name" value="Nucleic acid-binding proteins"/>
    <property type="match status" value="1"/>
</dbReference>
<dbReference type="Gene3D" id="3.40.50.300">
    <property type="entry name" value="P-loop containing nucleotide triphosphate hydrolases"/>
    <property type="match status" value="1"/>
</dbReference>
<dbReference type="InterPro" id="IPR003593">
    <property type="entry name" value="AAA+_ATPase"/>
</dbReference>
<dbReference type="InterPro" id="IPR003439">
    <property type="entry name" value="ABC_transporter-like_ATP-bd"/>
</dbReference>
<dbReference type="InterPro" id="IPR017871">
    <property type="entry name" value="ABC_transporter-like_CS"/>
</dbReference>
<dbReference type="InterPro" id="IPR015855">
    <property type="entry name" value="ABC_transpr_MalK-like"/>
</dbReference>
<dbReference type="InterPro" id="IPR047641">
    <property type="entry name" value="ABC_transpr_MalK/UgpC-like"/>
</dbReference>
<dbReference type="InterPro" id="IPR008995">
    <property type="entry name" value="Mo/tungstate-bd_C_term_dom"/>
</dbReference>
<dbReference type="InterPro" id="IPR012340">
    <property type="entry name" value="NA-bd_OB-fold"/>
</dbReference>
<dbReference type="InterPro" id="IPR040582">
    <property type="entry name" value="OB_MalK-like"/>
</dbReference>
<dbReference type="InterPro" id="IPR027417">
    <property type="entry name" value="P-loop_NTPase"/>
</dbReference>
<dbReference type="NCBIfam" id="NF008653">
    <property type="entry name" value="PRK11650.1"/>
    <property type="match status" value="1"/>
</dbReference>
<dbReference type="PANTHER" id="PTHR43875">
    <property type="entry name" value="MALTODEXTRIN IMPORT ATP-BINDING PROTEIN MSMX"/>
    <property type="match status" value="1"/>
</dbReference>
<dbReference type="PANTHER" id="PTHR43875:SF12">
    <property type="entry name" value="SN-GLYCEROL-3-PHOSPHATE IMPORT ATP-BINDING PROTEIN UGPC"/>
    <property type="match status" value="1"/>
</dbReference>
<dbReference type="Pfam" id="PF00005">
    <property type="entry name" value="ABC_tran"/>
    <property type="match status" value="1"/>
</dbReference>
<dbReference type="Pfam" id="PF17912">
    <property type="entry name" value="OB_MalK"/>
    <property type="match status" value="1"/>
</dbReference>
<dbReference type="SMART" id="SM00382">
    <property type="entry name" value="AAA"/>
    <property type="match status" value="1"/>
</dbReference>
<dbReference type="SUPFAM" id="SSF50331">
    <property type="entry name" value="MOP-like"/>
    <property type="match status" value="1"/>
</dbReference>
<dbReference type="SUPFAM" id="SSF52540">
    <property type="entry name" value="P-loop containing nucleoside triphosphate hydrolases"/>
    <property type="match status" value="1"/>
</dbReference>
<dbReference type="PROSITE" id="PS00211">
    <property type="entry name" value="ABC_TRANSPORTER_1"/>
    <property type="match status" value="1"/>
</dbReference>
<dbReference type="PROSITE" id="PS50893">
    <property type="entry name" value="ABC_TRANSPORTER_2"/>
    <property type="match status" value="1"/>
</dbReference>
<dbReference type="PROSITE" id="PS51315">
    <property type="entry name" value="UGPC"/>
    <property type="match status" value="1"/>
</dbReference>
<gene>
    <name evidence="1" type="primary">ugpC</name>
    <name type="ordered locus">ECA4319</name>
</gene>
<name>UGPC_PECAS</name>